<proteinExistence type="evidence at transcript level"/>
<name>BAHD2_ARATH</name>
<dbReference type="EC" id="2.3.1.-"/>
<dbReference type="EMBL" id="AB028618">
    <property type="protein sequence ID" value="BAB02519.1"/>
    <property type="molecule type" value="Genomic_DNA"/>
</dbReference>
<dbReference type="EMBL" id="CP002686">
    <property type="protein sequence ID" value="AEE77600.1"/>
    <property type="molecule type" value="Genomic_DNA"/>
</dbReference>
<dbReference type="RefSeq" id="NP_189610.1">
    <property type="nucleotide sequence ID" value="NM_113890.3"/>
</dbReference>
<dbReference type="SMR" id="Q9LRQ7"/>
<dbReference type="STRING" id="3702.Q9LRQ7"/>
<dbReference type="iPTMnet" id="Q9LRQ7"/>
<dbReference type="PaxDb" id="3702-AT3G29680.1"/>
<dbReference type="ProteomicsDB" id="241198"/>
<dbReference type="DNASU" id="822646"/>
<dbReference type="EnsemblPlants" id="AT3G29680.1">
    <property type="protein sequence ID" value="AT3G29680.1"/>
    <property type="gene ID" value="AT3G29680"/>
</dbReference>
<dbReference type="GeneID" id="822646"/>
<dbReference type="Gramene" id="AT3G29680.1">
    <property type="protein sequence ID" value="AT3G29680.1"/>
    <property type="gene ID" value="AT3G29680"/>
</dbReference>
<dbReference type="KEGG" id="ath:AT3G29680"/>
<dbReference type="Araport" id="AT3G29680"/>
<dbReference type="TAIR" id="AT3G29680"/>
<dbReference type="eggNOG" id="ENOG502QPXT">
    <property type="taxonomic scope" value="Eukaryota"/>
</dbReference>
<dbReference type="HOGENOM" id="CLU_014546_7_0_1"/>
<dbReference type="InParanoid" id="Q9LRQ7"/>
<dbReference type="OMA" id="ENNPRNH"/>
<dbReference type="PhylomeDB" id="Q9LRQ7"/>
<dbReference type="BioCyc" id="ARA:AT3G29680-MONOMER"/>
<dbReference type="PRO" id="PR:Q9LRQ7"/>
<dbReference type="Proteomes" id="UP000006548">
    <property type="component" value="Chromosome 3"/>
</dbReference>
<dbReference type="ExpressionAtlas" id="Q9LRQ7">
    <property type="expression patterns" value="baseline and differential"/>
</dbReference>
<dbReference type="GO" id="GO:0016747">
    <property type="term" value="F:acyltransferase activity, transferring groups other than amino-acyl groups"/>
    <property type="evidence" value="ECO:0007669"/>
    <property type="project" value="UniProtKB-ARBA"/>
</dbReference>
<dbReference type="FunFam" id="3.30.559.10:FF:000035">
    <property type="entry name" value="Phenolic glucoside malonyltransferase 1"/>
    <property type="match status" value="1"/>
</dbReference>
<dbReference type="Gene3D" id="3.30.559.10">
    <property type="entry name" value="Chloramphenicol acetyltransferase-like domain"/>
    <property type="match status" value="2"/>
</dbReference>
<dbReference type="InterPro" id="IPR023213">
    <property type="entry name" value="CAT-like_dom_sf"/>
</dbReference>
<dbReference type="InterPro" id="IPR051504">
    <property type="entry name" value="Plant_metabolite_acyltrans"/>
</dbReference>
<dbReference type="PANTHER" id="PTHR31625">
    <property type="match status" value="1"/>
</dbReference>
<dbReference type="Pfam" id="PF02458">
    <property type="entry name" value="Transferase"/>
    <property type="match status" value="1"/>
</dbReference>
<dbReference type="SUPFAM" id="SSF52777">
    <property type="entry name" value="CoA-dependent acyltransferases"/>
    <property type="match status" value="1"/>
</dbReference>
<accession>Q9LRQ7</accession>
<feature type="chain" id="PRO_0000419544" description="BAHD acyltransferase At3g29680">
    <location>
        <begin position="1"/>
        <end position="451"/>
    </location>
</feature>
<feature type="active site" description="Proton acceptor" evidence="1">
    <location>
        <position position="161"/>
    </location>
</feature>
<feature type="active site" description="Proton acceptor" evidence="1">
    <location>
        <position position="393"/>
    </location>
</feature>
<gene>
    <name type="ordered locus">At3g29680</name>
    <name type="ORF">MOD1.4</name>
</gene>
<organism>
    <name type="scientific">Arabidopsis thaliana</name>
    <name type="common">Mouse-ear cress</name>
    <dbReference type="NCBI Taxonomy" id="3702"/>
    <lineage>
        <taxon>Eukaryota</taxon>
        <taxon>Viridiplantae</taxon>
        <taxon>Streptophyta</taxon>
        <taxon>Embryophyta</taxon>
        <taxon>Tracheophyta</taxon>
        <taxon>Spermatophyta</taxon>
        <taxon>Magnoliopsida</taxon>
        <taxon>eudicotyledons</taxon>
        <taxon>Gunneridae</taxon>
        <taxon>Pentapetalae</taxon>
        <taxon>rosids</taxon>
        <taxon>malvids</taxon>
        <taxon>Brassicales</taxon>
        <taxon>Brassicaceae</taxon>
        <taxon>Camelineae</taxon>
        <taxon>Arabidopsis</taxon>
    </lineage>
</organism>
<protein>
    <recommendedName>
        <fullName>BAHD acyltransferase At3g29680</fullName>
        <ecNumber>2.3.1.-</ecNumber>
    </recommendedName>
    <alternativeName>
        <fullName>Probable anthocyanin acyltransferase</fullName>
    </alternativeName>
</protein>
<reference key="1">
    <citation type="journal article" date="2000" name="DNA Res.">
        <title>Structural analysis of Arabidopsis thaliana chromosome 3. II. Sequence features of the 4,251,695 bp regions covered by 90 P1, TAC and BAC clones.</title>
        <authorList>
            <person name="Kaneko T."/>
            <person name="Katoh T."/>
            <person name="Sato S."/>
            <person name="Nakamura Y."/>
            <person name="Asamizu E."/>
            <person name="Tabata S."/>
        </authorList>
    </citation>
    <scope>NUCLEOTIDE SEQUENCE [LARGE SCALE GENOMIC DNA]</scope>
    <source>
        <strain>cv. Columbia</strain>
    </source>
</reference>
<reference key="2">
    <citation type="journal article" date="2017" name="Plant J.">
        <title>Araport11: a complete reannotation of the Arabidopsis thaliana reference genome.</title>
        <authorList>
            <person name="Cheng C.Y."/>
            <person name="Krishnakumar V."/>
            <person name="Chan A.P."/>
            <person name="Thibaud-Nissen F."/>
            <person name="Schobel S."/>
            <person name="Town C.D."/>
        </authorList>
    </citation>
    <scope>GENOME REANNOTATION</scope>
    <source>
        <strain>cv. Columbia</strain>
    </source>
</reference>
<reference key="3">
    <citation type="journal article" date="2007" name="Plant J.">
        <title>Convergent evolution in the BAHD family of acyl transferases: identification and characterization of anthocyanin acyl transferases from Arabidopsis thaliana.</title>
        <authorList>
            <person name="Luo J."/>
            <person name="Nishiyama Y."/>
            <person name="Fuell C."/>
            <person name="Taguchi G."/>
            <person name="Elliott K."/>
            <person name="Hill L."/>
            <person name="Tanaka Y."/>
            <person name="Kitayama M."/>
            <person name="Yamazaki M."/>
            <person name="Bailey P."/>
            <person name="Parr A."/>
            <person name="Michael A.J."/>
            <person name="Saito K."/>
            <person name="Martin C."/>
        </authorList>
    </citation>
    <scope>IDENTIFICATION</scope>
    <scope>INDUCTION</scope>
</reference>
<evidence type="ECO:0000250" key="1"/>
<evidence type="ECO:0000269" key="2">
    <source>
    </source>
</evidence>
<evidence type="ECO:0000305" key="3"/>
<comment type="induction">
    <text evidence="2">Up-regulated by high sucrose and by low phosphate stresses.</text>
</comment>
<comment type="similarity">
    <text evidence="3">Belongs to the plant acyltransferase family.</text>
</comment>
<keyword id="KW-0012">Acyltransferase</keyword>
<keyword id="KW-1185">Reference proteome</keyword>
<keyword id="KW-0808">Transferase</keyword>
<sequence>MALNVIKISRVSLVTNSVEPLVLPLTFFDLLWLKLNPIERVTFYKLTESSRDSFFSSILPKLEQSLSLVLSHFLPLSGHLKWNPQDPKPHIVIFPKDTVSLTVVESEADFSYISSKELRLETELRPLVPELQVSSDSASLLSLQITLFPNQGFSIGTTVHHVVMDGKTASKFHKSWAHICKHGTTPQDFDLPTVLDRTVINVPAGLEQKIFQLSSYISEEKDYARTLTLPPAKEIDNDVVRVTLELTEVDIEKLKERAKNESTRSDLHLSTFVVSYAYVLTCMVKSCGGDANRPVRFMYAADFRNRLDPPVPLTYFGNCVLPIDFNGYKATTFLGKDGYVNGVEILSDSVRGLGSRNIESIWEVYEDGTKNMKLDTQNVTVTGSNQFGIYGSDFGWGRPVKTDVMSLYKNNEFSMSARRDEIGGLEIGISLKKCEMNVFLSLFTSDFDIYK</sequence>